<name>URE3_BURA4</name>
<reference key="1">
    <citation type="submission" date="2008-04" db="EMBL/GenBank/DDBJ databases">
        <title>Complete sequence of chromosome 1 of Burkholderia ambifaria MC40-6.</title>
        <authorList>
            <person name="Copeland A."/>
            <person name="Lucas S."/>
            <person name="Lapidus A."/>
            <person name="Glavina del Rio T."/>
            <person name="Dalin E."/>
            <person name="Tice H."/>
            <person name="Pitluck S."/>
            <person name="Chain P."/>
            <person name="Malfatti S."/>
            <person name="Shin M."/>
            <person name="Vergez L."/>
            <person name="Lang D."/>
            <person name="Schmutz J."/>
            <person name="Larimer F."/>
            <person name="Land M."/>
            <person name="Hauser L."/>
            <person name="Kyrpides N."/>
            <person name="Lykidis A."/>
            <person name="Ramette A."/>
            <person name="Konstantinidis K."/>
            <person name="Tiedje J."/>
            <person name="Richardson P."/>
        </authorList>
    </citation>
    <scope>NUCLEOTIDE SEQUENCE [LARGE SCALE GENOMIC DNA]</scope>
    <source>
        <strain>MC40-6</strain>
    </source>
</reference>
<protein>
    <recommendedName>
        <fullName evidence="1">Urease subunit gamma</fullName>
        <ecNumber evidence="1">3.5.1.5</ecNumber>
    </recommendedName>
    <alternativeName>
        <fullName evidence="1">Urea amidohydrolase subunit gamma</fullName>
    </alternativeName>
</protein>
<feature type="chain" id="PRO_1000199852" description="Urease subunit gamma">
    <location>
        <begin position="1"/>
        <end position="100"/>
    </location>
</feature>
<gene>
    <name evidence="1" type="primary">ureA</name>
    <name type="ordered locus">BamMC406_0792</name>
</gene>
<sequence length="100" mass="11100">MKLTPREKDKLLIFTAALLAERRRARGLKLNYPEAVAFITAALMEAARDGKTVAEVMHYGTTLLTRDDVMDGVPEMIPDIQVEATFPDGTKLVTVHHPIP</sequence>
<evidence type="ECO:0000255" key="1">
    <source>
        <dbReference type="HAMAP-Rule" id="MF_00739"/>
    </source>
</evidence>
<dbReference type="EC" id="3.5.1.5" evidence="1"/>
<dbReference type="EMBL" id="CP001025">
    <property type="protein sequence ID" value="ACB63288.1"/>
    <property type="molecule type" value="Genomic_DNA"/>
</dbReference>
<dbReference type="RefSeq" id="WP_006406310.1">
    <property type="nucleotide sequence ID" value="NC_010551.1"/>
</dbReference>
<dbReference type="SMR" id="B1YUG1"/>
<dbReference type="GeneID" id="98102707"/>
<dbReference type="KEGG" id="bac:BamMC406_0792"/>
<dbReference type="HOGENOM" id="CLU_145825_1_0_4"/>
<dbReference type="OrthoDB" id="9797217at2"/>
<dbReference type="UniPathway" id="UPA00258">
    <property type="reaction ID" value="UER00370"/>
</dbReference>
<dbReference type="Proteomes" id="UP000001680">
    <property type="component" value="Chromosome 1"/>
</dbReference>
<dbReference type="GO" id="GO:0005737">
    <property type="term" value="C:cytoplasm"/>
    <property type="evidence" value="ECO:0007669"/>
    <property type="project" value="UniProtKB-SubCell"/>
</dbReference>
<dbReference type="GO" id="GO:0016151">
    <property type="term" value="F:nickel cation binding"/>
    <property type="evidence" value="ECO:0007669"/>
    <property type="project" value="InterPro"/>
</dbReference>
<dbReference type="GO" id="GO:0009039">
    <property type="term" value="F:urease activity"/>
    <property type="evidence" value="ECO:0007669"/>
    <property type="project" value="UniProtKB-UniRule"/>
</dbReference>
<dbReference type="GO" id="GO:0043419">
    <property type="term" value="P:urea catabolic process"/>
    <property type="evidence" value="ECO:0007669"/>
    <property type="project" value="UniProtKB-UniRule"/>
</dbReference>
<dbReference type="CDD" id="cd00390">
    <property type="entry name" value="Urease_gamma"/>
    <property type="match status" value="1"/>
</dbReference>
<dbReference type="Gene3D" id="3.30.280.10">
    <property type="entry name" value="Urease, gamma-like subunit"/>
    <property type="match status" value="1"/>
</dbReference>
<dbReference type="HAMAP" id="MF_00739">
    <property type="entry name" value="Urease_gamma"/>
    <property type="match status" value="1"/>
</dbReference>
<dbReference type="InterPro" id="IPR012010">
    <property type="entry name" value="Urease_gamma"/>
</dbReference>
<dbReference type="InterPro" id="IPR002026">
    <property type="entry name" value="Urease_gamma/gamma-beta_su"/>
</dbReference>
<dbReference type="InterPro" id="IPR036463">
    <property type="entry name" value="Urease_gamma_sf"/>
</dbReference>
<dbReference type="InterPro" id="IPR050069">
    <property type="entry name" value="Urease_subunit"/>
</dbReference>
<dbReference type="NCBIfam" id="NF009712">
    <property type="entry name" value="PRK13241.1"/>
    <property type="match status" value="1"/>
</dbReference>
<dbReference type="NCBIfam" id="TIGR00193">
    <property type="entry name" value="urease_gam"/>
    <property type="match status" value="1"/>
</dbReference>
<dbReference type="PANTHER" id="PTHR33569">
    <property type="entry name" value="UREASE"/>
    <property type="match status" value="1"/>
</dbReference>
<dbReference type="PANTHER" id="PTHR33569:SF1">
    <property type="entry name" value="UREASE"/>
    <property type="match status" value="1"/>
</dbReference>
<dbReference type="Pfam" id="PF00547">
    <property type="entry name" value="Urease_gamma"/>
    <property type="match status" value="1"/>
</dbReference>
<dbReference type="PIRSF" id="PIRSF001223">
    <property type="entry name" value="Urease_gamma"/>
    <property type="match status" value="1"/>
</dbReference>
<dbReference type="SUPFAM" id="SSF54111">
    <property type="entry name" value="Urease, gamma-subunit"/>
    <property type="match status" value="1"/>
</dbReference>
<keyword id="KW-0963">Cytoplasm</keyword>
<keyword id="KW-0378">Hydrolase</keyword>
<accession>B1YUG1</accession>
<comment type="catalytic activity">
    <reaction evidence="1">
        <text>urea + 2 H2O + H(+) = hydrogencarbonate + 2 NH4(+)</text>
        <dbReference type="Rhea" id="RHEA:20557"/>
        <dbReference type="ChEBI" id="CHEBI:15377"/>
        <dbReference type="ChEBI" id="CHEBI:15378"/>
        <dbReference type="ChEBI" id="CHEBI:16199"/>
        <dbReference type="ChEBI" id="CHEBI:17544"/>
        <dbReference type="ChEBI" id="CHEBI:28938"/>
        <dbReference type="EC" id="3.5.1.5"/>
    </reaction>
</comment>
<comment type="pathway">
    <text evidence="1">Nitrogen metabolism; urea degradation; CO(2) and NH(3) from urea (urease route): step 1/1.</text>
</comment>
<comment type="subunit">
    <text evidence="1">Heterotrimer of UreA (gamma), UreB (beta) and UreC (alpha) subunits. Three heterotrimers associate to form the active enzyme.</text>
</comment>
<comment type="subcellular location">
    <subcellularLocation>
        <location evidence="1">Cytoplasm</location>
    </subcellularLocation>
</comment>
<comment type="similarity">
    <text evidence="1">Belongs to the urease gamma subunit family.</text>
</comment>
<organism>
    <name type="scientific">Burkholderia ambifaria (strain MC40-6)</name>
    <dbReference type="NCBI Taxonomy" id="398577"/>
    <lineage>
        <taxon>Bacteria</taxon>
        <taxon>Pseudomonadati</taxon>
        <taxon>Pseudomonadota</taxon>
        <taxon>Betaproteobacteria</taxon>
        <taxon>Burkholderiales</taxon>
        <taxon>Burkholderiaceae</taxon>
        <taxon>Burkholderia</taxon>
        <taxon>Burkholderia cepacia complex</taxon>
    </lineage>
</organism>
<proteinExistence type="inferred from homology"/>